<comment type="function">
    <text evidence="1">Catalyzes the conversion of dihydroorotate to orotate with quinone as electron acceptor.</text>
</comment>
<comment type="catalytic activity">
    <reaction evidence="1">
        <text>(S)-dihydroorotate + a quinone = orotate + a quinol</text>
        <dbReference type="Rhea" id="RHEA:30187"/>
        <dbReference type="ChEBI" id="CHEBI:24646"/>
        <dbReference type="ChEBI" id="CHEBI:30839"/>
        <dbReference type="ChEBI" id="CHEBI:30864"/>
        <dbReference type="ChEBI" id="CHEBI:132124"/>
        <dbReference type="EC" id="1.3.5.2"/>
    </reaction>
</comment>
<comment type="cofactor">
    <cofactor evidence="1">
        <name>FMN</name>
        <dbReference type="ChEBI" id="CHEBI:58210"/>
    </cofactor>
    <text evidence="1">Binds 1 FMN per subunit.</text>
</comment>
<comment type="pathway">
    <text evidence="1">Pyrimidine metabolism; UMP biosynthesis via de novo pathway; orotate from (S)-dihydroorotate (quinone route): step 1/1.</text>
</comment>
<comment type="subunit">
    <text evidence="1">Monomer.</text>
</comment>
<comment type="subcellular location">
    <subcellularLocation>
        <location evidence="1">Cell membrane</location>
        <topology evidence="1">Peripheral membrane protein</topology>
    </subcellularLocation>
</comment>
<comment type="similarity">
    <text evidence="1">Belongs to the dihydroorotate dehydrogenase family. Type 2 subfamily.</text>
</comment>
<accession>B8H8Q4</accession>
<name>PYRD_PSECP</name>
<keyword id="KW-1003">Cell membrane</keyword>
<keyword id="KW-0285">Flavoprotein</keyword>
<keyword id="KW-0288">FMN</keyword>
<keyword id="KW-0472">Membrane</keyword>
<keyword id="KW-0560">Oxidoreductase</keyword>
<keyword id="KW-0665">Pyrimidine biosynthesis</keyword>
<sequence length="356" mass="38034">MRVYPTFFKLAFSWMDAERAHTLGFKGIRLAHATGAGRVLRKLTAPAPSLQTTAFGITFPSPFGLAAGFDKEGHGIEALTELGFGHVEVGTITGQAQPGNEQPRLFRLIEDRAVINRMGFNNDGAAAVAPRLKSARAALQRTYPAVRPVIGVNIGKTKVVELADAVDDYRISARTLAPAADYLVVNVSSPNTPGLRLLQDVETLRPLLTAVGEEADRAAGRHVPLLVKIAPDLSDEDIDDVARLALDLKLDGIIATNTTIARTGLASPAEKVEQCGAGGLSGAPLKKRSLEVLRRLKQATGDALTLIAVGGVETAQDVQDRLDAGATLVQGYTAFLYEGPFWAARINRQLARSRRS</sequence>
<protein>
    <recommendedName>
        <fullName evidence="1">Dihydroorotate dehydrogenase (quinone)</fullName>
        <ecNumber evidence="1">1.3.5.2</ecNumber>
    </recommendedName>
    <alternativeName>
        <fullName evidence="1">DHOdehase</fullName>
        <shortName evidence="1">DHOD</shortName>
        <shortName evidence="1">DHODase</shortName>
    </alternativeName>
    <alternativeName>
        <fullName evidence="1">Dihydroorotate oxidase</fullName>
    </alternativeName>
</protein>
<reference key="1">
    <citation type="submission" date="2009-01" db="EMBL/GenBank/DDBJ databases">
        <title>Complete sequence of chromosome of Arthrobacter chlorophenolicus A6.</title>
        <authorList>
            <consortium name="US DOE Joint Genome Institute"/>
            <person name="Lucas S."/>
            <person name="Copeland A."/>
            <person name="Lapidus A."/>
            <person name="Glavina del Rio T."/>
            <person name="Tice H."/>
            <person name="Bruce D."/>
            <person name="Goodwin L."/>
            <person name="Pitluck S."/>
            <person name="Goltsman E."/>
            <person name="Clum A."/>
            <person name="Larimer F."/>
            <person name="Land M."/>
            <person name="Hauser L."/>
            <person name="Kyrpides N."/>
            <person name="Mikhailova N."/>
            <person name="Jansson J."/>
            <person name="Richardson P."/>
        </authorList>
    </citation>
    <scope>NUCLEOTIDE SEQUENCE [LARGE SCALE GENOMIC DNA]</scope>
    <source>
        <strain>ATCC 700700 / DSM 12829 / CIP 107037 / JCM 12360 / KCTC 9906 / NCIMB 13794 / A6</strain>
    </source>
</reference>
<feature type="chain" id="PRO_1000195062" description="Dihydroorotate dehydrogenase (quinone)">
    <location>
        <begin position="1"/>
        <end position="356"/>
    </location>
</feature>
<feature type="active site" description="Nucleophile" evidence="1">
    <location>
        <position position="189"/>
    </location>
</feature>
<feature type="binding site" evidence="1">
    <location>
        <begin position="67"/>
        <end position="71"/>
    </location>
    <ligand>
        <name>FMN</name>
        <dbReference type="ChEBI" id="CHEBI:58210"/>
    </ligand>
</feature>
<feature type="binding site" evidence="1">
    <location>
        <position position="71"/>
    </location>
    <ligand>
        <name>substrate</name>
    </ligand>
</feature>
<feature type="binding site" evidence="1">
    <location>
        <position position="91"/>
    </location>
    <ligand>
        <name>FMN</name>
        <dbReference type="ChEBI" id="CHEBI:58210"/>
    </ligand>
</feature>
<feature type="binding site" evidence="1">
    <location>
        <begin position="116"/>
        <end position="120"/>
    </location>
    <ligand>
        <name>substrate</name>
    </ligand>
</feature>
<feature type="binding site" evidence="1">
    <location>
        <position position="153"/>
    </location>
    <ligand>
        <name>FMN</name>
        <dbReference type="ChEBI" id="CHEBI:58210"/>
    </ligand>
</feature>
<feature type="binding site" evidence="1">
    <location>
        <position position="186"/>
    </location>
    <ligand>
        <name>FMN</name>
        <dbReference type="ChEBI" id="CHEBI:58210"/>
    </ligand>
</feature>
<feature type="binding site" evidence="1">
    <location>
        <position position="186"/>
    </location>
    <ligand>
        <name>substrate</name>
    </ligand>
</feature>
<feature type="binding site" evidence="1">
    <location>
        <position position="191"/>
    </location>
    <ligand>
        <name>substrate</name>
    </ligand>
</feature>
<feature type="binding site" evidence="1">
    <location>
        <position position="228"/>
    </location>
    <ligand>
        <name>FMN</name>
        <dbReference type="ChEBI" id="CHEBI:58210"/>
    </ligand>
</feature>
<feature type="binding site" evidence="1">
    <location>
        <position position="256"/>
    </location>
    <ligand>
        <name>FMN</name>
        <dbReference type="ChEBI" id="CHEBI:58210"/>
    </ligand>
</feature>
<feature type="binding site" evidence="1">
    <location>
        <begin position="257"/>
        <end position="258"/>
    </location>
    <ligand>
        <name>substrate</name>
    </ligand>
</feature>
<feature type="binding site" evidence="1">
    <location>
        <position position="282"/>
    </location>
    <ligand>
        <name>FMN</name>
        <dbReference type="ChEBI" id="CHEBI:58210"/>
    </ligand>
</feature>
<feature type="binding site" evidence="1">
    <location>
        <position position="311"/>
    </location>
    <ligand>
        <name>FMN</name>
        <dbReference type="ChEBI" id="CHEBI:58210"/>
    </ligand>
</feature>
<feature type="binding site" evidence="1">
    <location>
        <begin position="332"/>
        <end position="333"/>
    </location>
    <ligand>
        <name>FMN</name>
        <dbReference type="ChEBI" id="CHEBI:58210"/>
    </ligand>
</feature>
<organism>
    <name type="scientific">Pseudarthrobacter chlorophenolicus (strain ATCC 700700 / DSM 12829 / CIP 107037 / JCM 12360 / KCTC 9906 / NCIMB 13794 / A6)</name>
    <name type="common">Arthrobacter chlorophenolicus</name>
    <dbReference type="NCBI Taxonomy" id="452863"/>
    <lineage>
        <taxon>Bacteria</taxon>
        <taxon>Bacillati</taxon>
        <taxon>Actinomycetota</taxon>
        <taxon>Actinomycetes</taxon>
        <taxon>Micrococcales</taxon>
        <taxon>Micrococcaceae</taxon>
        <taxon>Pseudarthrobacter</taxon>
    </lineage>
</organism>
<evidence type="ECO:0000255" key="1">
    <source>
        <dbReference type="HAMAP-Rule" id="MF_00225"/>
    </source>
</evidence>
<dbReference type="EC" id="1.3.5.2" evidence="1"/>
<dbReference type="EMBL" id="CP001341">
    <property type="protein sequence ID" value="ACL39932.1"/>
    <property type="molecule type" value="Genomic_DNA"/>
</dbReference>
<dbReference type="RefSeq" id="WP_015937151.1">
    <property type="nucleotide sequence ID" value="NC_011886.1"/>
</dbReference>
<dbReference type="SMR" id="B8H8Q4"/>
<dbReference type="STRING" id="452863.Achl_1958"/>
<dbReference type="KEGG" id="ach:Achl_1958"/>
<dbReference type="eggNOG" id="COG0167">
    <property type="taxonomic scope" value="Bacteria"/>
</dbReference>
<dbReference type="HOGENOM" id="CLU_013640_2_0_11"/>
<dbReference type="OrthoDB" id="9802377at2"/>
<dbReference type="UniPathway" id="UPA00070">
    <property type="reaction ID" value="UER00946"/>
</dbReference>
<dbReference type="Proteomes" id="UP000002505">
    <property type="component" value="Chromosome"/>
</dbReference>
<dbReference type="GO" id="GO:0005737">
    <property type="term" value="C:cytoplasm"/>
    <property type="evidence" value="ECO:0007669"/>
    <property type="project" value="InterPro"/>
</dbReference>
<dbReference type="GO" id="GO:0005886">
    <property type="term" value="C:plasma membrane"/>
    <property type="evidence" value="ECO:0007669"/>
    <property type="project" value="UniProtKB-SubCell"/>
</dbReference>
<dbReference type="GO" id="GO:0106430">
    <property type="term" value="F:dihydroorotate dehydrogenase (quinone) activity"/>
    <property type="evidence" value="ECO:0007669"/>
    <property type="project" value="UniProtKB-EC"/>
</dbReference>
<dbReference type="GO" id="GO:0006207">
    <property type="term" value="P:'de novo' pyrimidine nucleobase biosynthetic process"/>
    <property type="evidence" value="ECO:0007669"/>
    <property type="project" value="InterPro"/>
</dbReference>
<dbReference type="GO" id="GO:0044205">
    <property type="term" value="P:'de novo' UMP biosynthetic process"/>
    <property type="evidence" value="ECO:0007669"/>
    <property type="project" value="UniProtKB-UniRule"/>
</dbReference>
<dbReference type="CDD" id="cd04738">
    <property type="entry name" value="DHOD_2_like"/>
    <property type="match status" value="1"/>
</dbReference>
<dbReference type="FunFam" id="3.20.20.70:FF:000123">
    <property type="entry name" value="Dihydroorotate dehydrogenase (quinone)"/>
    <property type="match status" value="1"/>
</dbReference>
<dbReference type="Gene3D" id="3.20.20.70">
    <property type="entry name" value="Aldolase class I"/>
    <property type="match status" value="1"/>
</dbReference>
<dbReference type="HAMAP" id="MF_00225">
    <property type="entry name" value="DHO_dh_type2"/>
    <property type="match status" value="1"/>
</dbReference>
<dbReference type="InterPro" id="IPR013785">
    <property type="entry name" value="Aldolase_TIM"/>
</dbReference>
<dbReference type="InterPro" id="IPR050074">
    <property type="entry name" value="DHO_dehydrogenase"/>
</dbReference>
<dbReference type="InterPro" id="IPR005719">
    <property type="entry name" value="Dihydroorotate_DH_2"/>
</dbReference>
<dbReference type="InterPro" id="IPR005720">
    <property type="entry name" value="Dihydroorotate_DH_cat"/>
</dbReference>
<dbReference type="InterPro" id="IPR001295">
    <property type="entry name" value="Dihydroorotate_DH_CS"/>
</dbReference>
<dbReference type="NCBIfam" id="NF003645">
    <property type="entry name" value="PRK05286.1-2"/>
    <property type="match status" value="1"/>
</dbReference>
<dbReference type="NCBIfam" id="NF003648">
    <property type="entry name" value="PRK05286.2-1"/>
    <property type="match status" value="1"/>
</dbReference>
<dbReference type="NCBIfam" id="NF003652">
    <property type="entry name" value="PRK05286.2-5"/>
    <property type="match status" value="1"/>
</dbReference>
<dbReference type="NCBIfam" id="TIGR01036">
    <property type="entry name" value="pyrD_sub2"/>
    <property type="match status" value="1"/>
</dbReference>
<dbReference type="PANTHER" id="PTHR48109:SF4">
    <property type="entry name" value="DIHYDROOROTATE DEHYDROGENASE (QUINONE), MITOCHONDRIAL"/>
    <property type="match status" value="1"/>
</dbReference>
<dbReference type="PANTHER" id="PTHR48109">
    <property type="entry name" value="DIHYDROOROTATE DEHYDROGENASE (QUINONE), MITOCHONDRIAL-RELATED"/>
    <property type="match status" value="1"/>
</dbReference>
<dbReference type="Pfam" id="PF01180">
    <property type="entry name" value="DHO_dh"/>
    <property type="match status" value="1"/>
</dbReference>
<dbReference type="SUPFAM" id="SSF51395">
    <property type="entry name" value="FMN-linked oxidoreductases"/>
    <property type="match status" value="1"/>
</dbReference>
<dbReference type="PROSITE" id="PS00911">
    <property type="entry name" value="DHODEHASE_1"/>
    <property type="match status" value="1"/>
</dbReference>
<dbReference type="PROSITE" id="PS00912">
    <property type="entry name" value="DHODEHASE_2"/>
    <property type="match status" value="1"/>
</dbReference>
<gene>
    <name evidence="1" type="primary">pyrD</name>
    <name type="ordered locus">Achl_1958</name>
</gene>
<proteinExistence type="inferred from homology"/>